<proteinExistence type="inferred from homology"/>
<keyword id="KW-0004">4Fe-4S</keyword>
<keyword id="KW-0067">ATP-binding</keyword>
<keyword id="KW-0963">Cytoplasm</keyword>
<keyword id="KW-0408">Iron</keyword>
<keyword id="KW-0411">Iron-sulfur</keyword>
<keyword id="KW-0460">Magnesium</keyword>
<keyword id="KW-0479">Metal-binding</keyword>
<keyword id="KW-0547">Nucleotide-binding</keyword>
<keyword id="KW-0694">RNA-binding</keyword>
<keyword id="KW-0808">Transferase</keyword>
<keyword id="KW-0819">tRNA processing</keyword>
<keyword id="KW-0820">tRNA-binding</keyword>
<evidence type="ECO:0000255" key="1">
    <source>
        <dbReference type="HAMAP-Rule" id="MF_01850"/>
    </source>
</evidence>
<name>TTCA_XANC8</name>
<accession>Q4UNZ5</accession>
<sequence length="300" mass="32949">MTAVLPLPLPLADPAPRTPRLQREPLRLAKRLRHAVGQAIADFGMIAPGDKVMVCLSGGKDSYTLLDMLLQLQRSAPVPFTLVAVNLDQKQPDFPADVLPTYLRAQQVPFDIIEQDTYSVVSRVIPQGKTMCSLCSRLRRGALYAYAQAHGVTKIALGHHRDDIVATFFMNLFHHARLAAMAPKLRSDDGAHVVIRPLAYVREADIAAYAQARQFPIIPCNLCGSQENLQRQQVGRMLQQWDREQPGRVDQIARALGDVRPEQLADRTLFDFPGLGGGADAPLPDAAGWLAGSAAEHARD</sequence>
<dbReference type="EC" id="2.8.1.-" evidence="1"/>
<dbReference type="EMBL" id="CP000050">
    <property type="protein sequence ID" value="AAY51228.1"/>
    <property type="molecule type" value="Genomic_DNA"/>
</dbReference>
<dbReference type="RefSeq" id="WP_011270092.1">
    <property type="nucleotide sequence ID" value="NC_007086.1"/>
</dbReference>
<dbReference type="SMR" id="Q4UNZ5"/>
<dbReference type="KEGG" id="xcb:XC_4190"/>
<dbReference type="HOGENOM" id="CLU_026481_0_1_6"/>
<dbReference type="Proteomes" id="UP000000420">
    <property type="component" value="Chromosome"/>
</dbReference>
<dbReference type="GO" id="GO:0005737">
    <property type="term" value="C:cytoplasm"/>
    <property type="evidence" value="ECO:0007669"/>
    <property type="project" value="UniProtKB-SubCell"/>
</dbReference>
<dbReference type="GO" id="GO:0051539">
    <property type="term" value="F:4 iron, 4 sulfur cluster binding"/>
    <property type="evidence" value="ECO:0007669"/>
    <property type="project" value="UniProtKB-UniRule"/>
</dbReference>
<dbReference type="GO" id="GO:0005524">
    <property type="term" value="F:ATP binding"/>
    <property type="evidence" value="ECO:0007669"/>
    <property type="project" value="UniProtKB-UniRule"/>
</dbReference>
<dbReference type="GO" id="GO:0000287">
    <property type="term" value="F:magnesium ion binding"/>
    <property type="evidence" value="ECO:0007669"/>
    <property type="project" value="UniProtKB-UniRule"/>
</dbReference>
<dbReference type="GO" id="GO:0016783">
    <property type="term" value="F:sulfurtransferase activity"/>
    <property type="evidence" value="ECO:0007669"/>
    <property type="project" value="UniProtKB-UniRule"/>
</dbReference>
<dbReference type="GO" id="GO:0000049">
    <property type="term" value="F:tRNA binding"/>
    <property type="evidence" value="ECO:0007669"/>
    <property type="project" value="UniProtKB-KW"/>
</dbReference>
<dbReference type="GO" id="GO:0034227">
    <property type="term" value="P:tRNA thio-modification"/>
    <property type="evidence" value="ECO:0007669"/>
    <property type="project" value="UniProtKB-UniRule"/>
</dbReference>
<dbReference type="CDD" id="cd24138">
    <property type="entry name" value="TtcA-like"/>
    <property type="match status" value="1"/>
</dbReference>
<dbReference type="Gene3D" id="3.40.50.620">
    <property type="entry name" value="HUPs"/>
    <property type="match status" value="1"/>
</dbReference>
<dbReference type="HAMAP" id="MF_01850">
    <property type="entry name" value="TtcA"/>
    <property type="match status" value="1"/>
</dbReference>
<dbReference type="InterPro" id="IPR014729">
    <property type="entry name" value="Rossmann-like_a/b/a_fold"/>
</dbReference>
<dbReference type="InterPro" id="IPR011063">
    <property type="entry name" value="TilS/TtcA_N"/>
</dbReference>
<dbReference type="InterPro" id="IPR012089">
    <property type="entry name" value="tRNA_Cyd_32_2_STrfase"/>
</dbReference>
<dbReference type="InterPro" id="IPR035107">
    <property type="entry name" value="tRNA_thiolation_TtcA_Ctu1"/>
</dbReference>
<dbReference type="NCBIfam" id="NF007972">
    <property type="entry name" value="PRK10696.1"/>
    <property type="match status" value="1"/>
</dbReference>
<dbReference type="PANTHER" id="PTHR43686:SF1">
    <property type="entry name" value="AMINOTRAN_5 DOMAIN-CONTAINING PROTEIN"/>
    <property type="match status" value="1"/>
</dbReference>
<dbReference type="PANTHER" id="PTHR43686">
    <property type="entry name" value="SULFURTRANSFERASE-RELATED"/>
    <property type="match status" value="1"/>
</dbReference>
<dbReference type="Pfam" id="PF01171">
    <property type="entry name" value="ATP_bind_3"/>
    <property type="match status" value="1"/>
</dbReference>
<dbReference type="PIRSF" id="PIRSF004976">
    <property type="entry name" value="ATPase_YdaO"/>
    <property type="match status" value="1"/>
</dbReference>
<dbReference type="SUPFAM" id="SSF52402">
    <property type="entry name" value="Adenine nucleotide alpha hydrolases-like"/>
    <property type="match status" value="1"/>
</dbReference>
<feature type="chain" id="PRO_0000348870" description="tRNA-cytidine(32) 2-sulfurtransferase">
    <location>
        <begin position="1"/>
        <end position="300"/>
    </location>
</feature>
<feature type="short sequence motif" description="PP-loop motif" evidence="1">
    <location>
        <begin position="57"/>
        <end position="62"/>
    </location>
</feature>
<feature type="binding site" evidence="1">
    <location>
        <position position="132"/>
    </location>
    <ligand>
        <name>[4Fe-4S] cluster</name>
        <dbReference type="ChEBI" id="CHEBI:49883"/>
    </ligand>
</feature>
<feature type="binding site" evidence="1">
    <location>
        <position position="135"/>
    </location>
    <ligand>
        <name>[4Fe-4S] cluster</name>
        <dbReference type="ChEBI" id="CHEBI:49883"/>
    </ligand>
</feature>
<feature type="binding site" evidence="1">
    <location>
        <position position="223"/>
    </location>
    <ligand>
        <name>[4Fe-4S] cluster</name>
        <dbReference type="ChEBI" id="CHEBI:49883"/>
    </ligand>
</feature>
<organism>
    <name type="scientific">Xanthomonas campestris pv. campestris (strain 8004)</name>
    <dbReference type="NCBI Taxonomy" id="314565"/>
    <lineage>
        <taxon>Bacteria</taxon>
        <taxon>Pseudomonadati</taxon>
        <taxon>Pseudomonadota</taxon>
        <taxon>Gammaproteobacteria</taxon>
        <taxon>Lysobacterales</taxon>
        <taxon>Lysobacteraceae</taxon>
        <taxon>Xanthomonas</taxon>
    </lineage>
</organism>
<comment type="function">
    <text evidence="1">Catalyzes the ATP-dependent 2-thiolation of cytidine in position 32 of tRNA, to form 2-thiocytidine (s(2)C32). The sulfur atoms are provided by the cysteine/cysteine desulfurase (IscS) system.</text>
</comment>
<comment type="catalytic activity">
    <reaction evidence="1">
        <text>cytidine(32) in tRNA + S-sulfanyl-L-cysteinyl-[cysteine desulfurase] + AH2 + ATP = 2-thiocytidine(32) in tRNA + L-cysteinyl-[cysteine desulfurase] + A + AMP + diphosphate + H(+)</text>
        <dbReference type="Rhea" id="RHEA:57048"/>
        <dbReference type="Rhea" id="RHEA-COMP:10288"/>
        <dbReference type="Rhea" id="RHEA-COMP:12157"/>
        <dbReference type="Rhea" id="RHEA-COMP:12158"/>
        <dbReference type="Rhea" id="RHEA-COMP:14821"/>
        <dbReference type="ChEBI" id="CHEBI:13193"/>
        <dbReference type="ChEBI" id="CHEBI:15378"/>
        <dbReference type="ChEBI" id="CHEBI:17499"/>
        <dbReference type="ChEBI" id="CHEBI:29950"/>
        <dbReference type="ChEBI" id="CHEBI:30616"/>
        <dbReference type="ChEBI" id="CHEBI:33019"/>
        <dbReference type="ChEBI" id="CHEBI:61963"/>
        <dbReference type="ChEBI" id="CHEBI:82748"/>
        <dbReference type="ChEBI" id="CHEBI:141453"/>
        <dbReference type="ChEBI" id="CHEBI:456215"/>
    </reaction>
    <physiologicalReaction direction="left-to-right" evidence="1">
        <dbReference type="Rhea" id="RHEA:57049"/>
    </physiologicalReaction>
</comment>
<comment type="cofactor">
    <cofactor evidence="1">
        <name>Mg(2+)</name>
        <dbReference type="ChEBI" id="CHEBI:18420"/>
    </cofactor>
</comment>
<comment type="cofactor">
    <cofactor evidence="1">
        <name>[4Fe-4S] cluster</name>
        <dbReference type="ChEBI" id="CHEBI:49883"/>
    </cofactor>
    <text evidence="1">Binds 1 [4Fe-4S] cluster per subunit. The cluster is chelated by three Cys residues, the fourth Fe has a free coordination site that may bind a sulfur atom transferred from the persulfide of IscS.</text>
</comment>
<comment type="pathway">
    <text evidence="1">tRNA modification.</text>
</comment>
<comment type="subunit">
    <text evidence="1">Homodimer.</text>
</comment>
<comment type="subcellular location">
    <subcellularLocation>
        <location evidence="1">Cytoplasm</location>
    </subcellularLocation>
</comment>
<comment type="miscellaneous">
    <text evidence="1">The thiolation reaction likely consists of two steps: a first activation step by ATP to form an adenylated intermediate of the target base of tRNA, and a second nucleophilic substitution step of the sulfur (S) atom supplied by the hydrosulfide attached to the Fe-S cluster.</text>
</comment>
<comment type="similarity">
    <text evidence="1">Belongs to the TtcA family.</text>
</comment>
<reference key="1">
    <citation type="journal article" date="2005" name="Genome Res.">
        <title>Comparative and functional genomic analyses of the pathogenicity of phytopathogen Xanthomonas campestris pv. campestris.</title>
        <authorList>
            <person name="Qian W."/>
            <person name="Jia Y."/>
            <person name="Ren S.-X."/>
            <person name="He Y.-Q."/>
            <person name="Feng J.-X."/>
            <person name="Lu L.-F."/>
            <person name="Sun Q."/>
            <person name="Ying G."/>
            <person name="Tang D.-J."/>
            <person name="Tang H."/>
            <person name="Wu W."/>
            <person name="Hao P."/>
            <person name="Wang L."/>
            <person name="Jiang B.-L."/>
            <person name="Zeng S."/>
            <person name="Gu W.-Y."/>
            <person name="Lu G."/>
            <person name="Rong L."/>
            <person name="Tian Y."/>
            <person name="Yao Z."/>
            <person name="Fu G."/>
            <person name="Chen B."/>
            <person name="Fang R."/>
            <person name="Qiang B."/>
            <person name="Chen Z."/>
            <person name="Zhao G.-P."/>
            <person name="Tang J.-L."/>
            <person name="He C."/>
        </authorList>
    </citation>
    <scope>NUCLEOTIDE SEQUENCE [LARGE SCALE GENOMIC DNA]</scope>
    <source>
        <strain>8004</strain>
    </source>
</reference>
<protein>
    <recommendedName>
        <fullName evidence="1">tRNA-cytidine(32) 2-sulfurtransferase</fullName>
        <ecNumber evidence="1">2.8.1.-</ecNumber>
    </recommendedName>
    <alternativeName>
        <fullName evidence="1">Two-thiocytidine biosynthesis protein A</fullName>
    </alternativeName>
    <alternativeName>
        <fullName evidence="1">tRNA 2-thiocytidine biosynthesis protein TtcA</fullName>
    </alternativeName>
</protein>
<gene>
    <name evidence="1" type="primary">ttcA</name>
    <name type="ordered locus">XC_4190</name>
</gene>